<proteinExistence type="uncertain"/>
<name>CK037_HUMAN</name>
<evidence type="ECO:0000256" key="1">
    <source>
        <dbReference type="SAM" id="MobiDB-lite"/>
    </source>
</evidence>
<evidence type="ECO:0000305" key="2"/>
<evidence type="ECO:0000312" key="3">
    <source>
        <dbReference type="HGNC" id="HGNC:30468"/>
    </source>
</evidence>
<organism>
    <name type="scientific">Homo sapiens</name>
    <name type="common">Human</name>
    <dbReference type="NCBI Taxonomy" id="9606"/>
    <lineage>
        <taxon>Eukaryota</taxon>
        <taxon>Metazoa</taxon>
        <taxon>Chordata</taxon>
        <taxon>Craniata</taxon>
        <taxon>Vertebrata</taxon>
        <taxon>Euteleostomi</taxon>
        <taxon>Mammalia</taxon>
        <taxon>Eutheria</taxon>
        <taxon>Euarchontoglires</taxon>
        <taxon>Primates</taxon>
        <taxon>Haplorrhini</taxon>
        <taxon>Catarrhini</taxon>
        <taxon>Hominidae</taxon>
        <taxon>Homo</taxon>
    </lineage>
</organism>
<keyword id="KW-1185">Reference proteome</keyword>
<sequence>MTEGLFISCSAVRVKPNRRAGLRRRSPAFLLSANQKTRLFALGSSPRCGPRANGEEASSCAWVSRAPRAACARAKPASRAPEGPVSRKTRGGEAALASARPATDCLRSGLAVERRRKPNSRPAPGVGSLPGSRPQDPQGAAGRRLSP</sequence>
<protein>
    <recommendedName>
        <fullName>Putative uncharacterized protein encoded by LINC00167</fullName>
    </recommendedName>
    <alternativeName>
        <fullName evidence="3">PRDM10-DT divergent transcript</fullName>
    </alternativeName>
</protein>
<gene>
    <name evidence="3" type="primary">PRDM10-DT</name>
    <name type="synonym">C11orf37</name>
    <name type="synonym">LINC00167</name>
    <name type="synonym">NCRNA00167</name>
</gene>
<dbReference type="EMBL" id="AK055956">
    <property type="protein sequence ID" value="BAB71056.1"/>
    <property type="molecule type" value="mRNA"/>
</dbReference>
<dbReference type="EMBL" id="BC137306">
    <property type="status" value="NOT_ANNOTATED_CDS"/>
    <property type="molecule type" value="mRNA"/>
</dbReference>
<dbReference type="EMBL" id="BC137307">
    <property type="status" value="NOT_ANNOTATED_CDS"/>
    <property type="molecule type" value="mRNA"/>
</dbReference>
<dbReference type="GlyGen" id="Q96N53">
    <property type="glycosylation" value="1 site, 1 O-linked glycan (1 site)"/>
</dbReference>
<dbReference type="BioMuta" id="HGNC:30468"/>
<dbReference type="DMDM" id="74732498"/>
<dbReference type="MassIVE" id="Q96N53"/>
<dbReference type="ProteomicsDB" id="77466"/>
<dbReference type="AGR" id="HGNC:30468"/>
<dbReference type="GeneCards" id="PRDM10-DT"/>
<dbReference type="HGNC" id="HGNC:30468">
    <property type="gene designation" value="PRDM10-DT"/>
</dbReference>
<dbReference type="neXtProt" id="NX_Q96N53"/>
<dbReference type="InParanoid" id="Q96N53"/>
<dbReference type="PAN-GO" id="Q96N53">
    <property type="GO annotations" value="0 GO annotations based on evolutionary models"/>
</dbReference>
<dbReference type="Pharos" id="Q96N53">
    <property type="development level" value="Tdark"/>
</dbReference>
<dbReference type="Proteomes" id="UP000005640">
    <property type="component" value="Unplaced"/>
</dbReference>
<dbReference type="RNAct" id="Q96N53">
    <property type="molecule type" value="protein"/>
</dbReference>
<comment type="caution">
    <text evidence="2">Product of a dubious CDS prediction. Probable non-coding RNA.</text>
</comment>
<reference key="1">
    <citation type="journal article" date="2004" name="Nat. Genet.">
        <title>Complete sequencing and characterization of 21,243 full-length human cDNAs.</title>
        <authorList>
            <person name="Ota T."/>
            <person name="Suzuki Y."/>
            <person name="Nishikawa T."/>
            <person name="Otsuki T."/>
            <person name="Sugiyama T."/>
            <person name="Irie R."/>
            <person name="Wakamatsu A."/>
            <person name="Hayashi K."/>
            <person name="Sato H."/>
            <person name="Nagai K."/>
            <person name="Kimura K."/>
            <person name="Makita H."/>
            <person name="Sekine M."/>
            <person name="Obayashi M."/>
            <person name="Nishi T."/>
            <person name="Shibahara T."/>
            <person name="Tanaka T."/>
            <person name="Ishii S."/>
            <person name="Yamamoto J."/>
            <person name="Saito K."/>
            <person name="Kawai Y."/>
            <person name="Isono Y."/>
            <person name="Nakamura Y."/>
            <person name="Nagahari K."/>
            <person name="Murakami K."/>
            <person name="Yasuda T."/>
            <person name="Iwayanagi T."/>
            <person name="Wagatsuma M."/>
            <person name="Shiratori A."/>
            <person name="Sudo H."/>
            <person name="Hosoiri T."/>
            <person name="Kaku Y."/>
            <person name="Kodaira H."/>
            <person name="Kondo H."/>
            <person name="Sugawara M."/>
            <person name="Takahashi M."/>
            <person name="Kanda K."/>
            <person name="Yokoi T."/>
            <person name="Furuya T."/>
            <person name="Kikkawa E."/>
            <person name="Omura Y."/>
            <person name="Abe K."/>
            <person name="Kamihara K."/>
            <person name="Katsuta N."/>
            <person name="Sato K."/>
            <person name="Tanikawa M."/>
            <person name="Yamazaki M."/>
            <person name="Ninomiya K."/>
            <person name="Ishibashi T."/>
            <person name="Yamashita H."/>
            <person name="Murakawa K."/>
            <person name="Fujimori K."/>
            <person name="Tanai H."/>
            <person name="Kimata M."/>
            <person name="Watanabe M."/>
            <person name="Hiraoka S."/>
            <person name="Chiba Y."/>
            <person name="Ishida S."/>
            <person name="Ono Y."/>
            <person name="Takiguchi S."/>
            <person name="Watanabe S."/>
            <person name="Yosida M."/>
            <person name="Hotuta T."/>
            <person name="Kusano J."/>
            <person name="Kanehori K."/>
            <person name="Takahashi-Fujii A."/>
            <person name="Hara H."/>
            <person name="Tanase T.-O."/>
            <person name="Nomura Y."/>
            <person name="Togiya S."/>
            <person name="Komai F."/>
            <person name="Hara R."/>
            <person name="Takeuchi K."/>
            <person name="Arita M."/>
            <person name="Imose N."/>
            <person name="Musashino K."/>
            <person name="Yuuki H."/>
            <person name="Oshima A."/>
            <person name="Sasaki N."/>
            <person name="Aotsuka S."/>
            <person name="Yoshikawa Y."/>
            <person name="Matsunawa H."/>
            <person name="Ichihara T."/>
            <person name="Shiohata N."/>
            <person name="Sano S."/>
            <person name="Moriya S."/>
            <person name="Momiyama H."/>
            <person name="Satoh N."/>
            <person name="Takami S."/>
            <person name="Terashima Y."/>
            <person name="Suzuki O."/>
            <person name="Nakagawa S."/>
            <person name="Senoh A."/>
            <person name="Mizoguchi H."/>
            <person name="Goto Y."/>
            <person name="Shimizu F."/>
            <person name="Wakebe H."/>
            <person name="Hishigaki H."/>
            <person name="Watanabe T."/>
            <person name="Sugiyama A."/>
            <person name="Takemoto M."/>
            <person name="Kawakami B."/>
            <person name="Yamazaki M."/>
            <person name="Watanabe K."/>
            <person name="Kumagai A."/>
            <person name="Itakura S."/>
            <person name="Fukuzumi Y."/>
            <person name="Fujimori Y."/>
            <person name="Komiyama M."/>
            <person name="Tashiro H."/>
            <person name="Tanigami A."/>
            <person name="Fujiwara T."/>
            <person name="Ono T."/>
            <person name="Yamada K."/>
            <person name="Fujii Y."/>
            <person name="Ozaki K."/>
            <person name="Hirao M."/>
            <person name="Ohmori Y."/>
            <person name="Kawabata A."/>
            <person name="Hikiji T."/>
            <person name="Kobatake N."/>
            <person name="Inagaki H."/>
            <person name="Ikema Y."/>
            <person name="Okamoto S."/>
            <person name="Okitani R."/>
            <person name="Kawakami T."/>
            <person name="Noguchi S."/>
            <person name="Itoh T."/>
            <person name="Shigeta K."/>
            <person name="Senba T."/>
            <person name="Matsumura K."/>
            <person name="Nakajima Y."/>
            <person name="Mizuno T."/>
            <person name="Morinaga M."/>
            <person name="Sasaki M."/>
            <person name="Togashi T."/>
            <person name="Oyama M."/>
            <person name="Hata H."/>
            <person name="Watanabe M."/>
            <person name="Komatsu T."/>
            <person name="Mizushima-Sugano J."/>
            <person name="Satoh T."/>
            <person name="Shirai Y."/>
            <person name="Takahashi Y."/>
            <person name="Nakagawa K."/>
            <person name="Okumura K."/>
            <person name="Nagase T."/>
            <person name="Nomura N."/>
            <person name="Kikuchi H."/>
            <person name="Masuho Y."/>
            <person name="Yamashita R."/>
            <person name="Nakai K."/>
            <person name="Yada T."/>
            <person name="Nakamura Y."/>
            <person name="Ohara O."/>
            <person name="Isogai T."/>
            <person name="Sugano S."/>
        </authorList>
    </citation>
    <scope>NUCLEOTIDE SEQUENCE [LARGE SCALE MRNA]</scope>
</reference>
<reference key="2">
    <citation type="journal article" date="2004" name="Genome Res.">
        <title>The status, quality, and expansion of the NIH full-length cDNA project: the Mammalian Gene Collection (MGC).</title>
        <authorList>
            <consortium name="The MGC Project Team"/>
        </authorList>
    </citation>
    <scope>NUCLEOTIDE SEQUENCE [LARGE SCALE MRNA]</scope>
</reference>
<feature type="chain" id="PRO_0000251726" description="Putative uncharacterized protein encoded by LINC00167">
    <location>
        <begin position="1"/>
        <end position="147"/>
    </location>
</feature>
<feature type="region of interest" description="Disordered" evidence="1">
    <location>
        <begin position="72"/>
        <end position="147"/>
    </location>
</feature>
<feature type="compositionally biased region" description="Low complexity" evidence="1">
    <location>
        <begin position="72"/>
        <end position="81"/>
    </location>
</feature>
<accession>Q96N53</accession>
<accession>B2RP80</accession>